<evidence type="ECO:0000255" key="1">
    <source>
        <dbReference type="HAMAP-Rule" id="MF_01147"/>
    </source>
</evidence>
<feature type="chain" id="PRO_1000065474" description="Phosphatidylglycerol--prolipoprotein diacylglyceryl transferase">
    <location>
        <begin position="1"/>
        <end position="291"/>
    </location>
</feature>
<feature type="transmembrane region" description="Helical" evidence="1">
    <location>
        <begin position="21"/>
        <end position="41"/>
    </location>
</feature>
<feature type="transmembrane region" description="Helical" evidence="1">
    <location>
        <begin position="60"/>
        <end position="80"/>
    </location>
</feature>
<feature type="transmembrane region" description="Helical" evidence="1">
    <location>
        <begin position="96"/>
        <end position="116"/>
    </location>
</feature>
<feature type="transmembrane region" description="Helical" evidence="1">
    <location>
        <begin position="225"/>
        <end position="245"/>
    </location>
</feature>
<feature type="transmembrane region" description="Helical" evidence="1">
    <location>
        <begin position="260"/>
        <end position="280"/>
    </location>
</feature>
<feature type="binding site" evidence="1">
    <location>
        <position position="143"/>
    </location>
    <ligand>
        <name>a 1,2-diacyl-sn-glycero-3-phospho-(1'-sn-glycerol)</name>
        <dbReference type="ChEBI" id="CHEBI:64716"/>
    </ligand>
</feature>
<protein>
    <recommendedName>
        <fullName evidence="1">Phosphatidylglycerol--prolipoprotein diacylglyceryl transferase</fullName>
        <ecNumber evidence="1">2.5.1.145</ecNumber>
    </recommendedName>
</protein>
<accession>A7ZQT4</accession>
<name>LGT_ECO24</name>
<organism>
    <name type="scientific">Escherichia coli O139:H28 (strain E24377A / ETEC)</name>
    <dbReference type="NCBI Taxonomy" id="331111"/>
    <lineage>
        <taxon>Bacteria</taxon>
        <taxon>Pseudomonadati</taxon>
        <taxon>Pseudomonadota</taxon>
        <taxon>Gammaproteobacteria</taxon>
        <taxon>Enterobacterales</taxon>
        <taxon>Enterobacteriaceae</taxon>
        <taxon>Escherichia</taxon>
    </lineage>
</organism>
<keyword id="KW-0997">Cell inner membrane</keyword>
<keyword id="KW-1003">Cell membrane</keyword>
<keyword id="KW-0472">Membrane</keyword>
<keyword id="KW-1185">Reference proteome</keyword>
<keyword id="KW-0808">Transferase</keyword>
<keyword id="KW-0812">Transmembrane</keyword>
<keyword id="KW-1133">Transmembrane helix</keyword>
<dbReference type="EC" id="2.5.1.145" evidence="1"/>
<dbReference type="EMBL" id="CP000800">
    <property type="protein sequence ID" value="ABV20673.1"/>
    <property type="molecule type" value="Genomic_DNA"/>
</dbReference>
<dbReference type="RefSeq" id="WP_000204658.1">
    <property type="nucleotide sequence ID" value="NC_009801.1"/>
</dbReference>
<dbReference type="SMR" id="A7ZQT4"/>
<dbReference type="GeneID" id="93779170"/>
<dbReference type="KEGG" id="ecw:EcE24377A_3148"/>
<dbReference type="HOGENOM" id="CLU_013386_1_0_6"/>
<dbReference type="UniPathway" id="UPA00664"/>
<dbReference type="Proteomes" id="UP000001122">
    <property type="component" value="Chromosome"/>
</dbReference>
<dbReference type="GO" id="GO:0005886">
    <property type="term" value="C:plasma membrane"/>
    <property type="evidence" value="ECO:0007669"/>
    <property type="project" value="UniProtKB-SubCell"/>
</dbReference>
<dbReference type="GO" id="GO:0008961">
    <property type="term" value="F:phosphatidylglycerol-prolipoprotein diacylglyceryl transferase activity"/>
    <property type="evidence" value="ECO:0007669"/>
    <property type="project" value="UniProtKB-UniRule"/>
</dbReference>
<dbReference type="GO" id="GO:0042158">
    <property type="term" value="P:lipoprotein biosynthetic process"/>
    <property type="evidence" value="ECO:0007669"/>
    <property type="project" value="UniProtKB-UniRule"/>
</dbReference>
<dbReference type="HAMAP" id="MF_01147">
    <property type="entry name" value="Lgt"/>
    <property type="match status" value="1"/>
</dbReference>
<dbReference type="InterPro" id="IPR001640">
    <property type="entry name" value="Lgt"/>
</dbReference>
<dbReference type="NCBIfam" id="TIGR00544">
    <property type="entry name" value="lgt"/>
    <property type="match status" value="1"/>
</dbReference>
<dbReference type="PANTHER" id="PTHR30589:SF0">
    <property type="entry name" value="PHOSPHATIDYLGLYCEROL--PROLIPOPROTEIN DIACYLGLYCERYL TRANSFERASE"/>
    <property type="match status" value="1"/>
</dbReference>
<dbReference type="PANTHER" id="PTHR30589">
    <property type="entry name" value="PROLIPOPROTEIN DIACYLGLYCERYL TRANSFERASE"/>
    <property type="match status" value="1"/>
</dbReference>
<dbReference type="Pfam" id="PF01790">
    <property type="entry name" value="LGT"/>
    <property type="match status" value="1"/>
</dbReference>
<dbReference type="PROSITE" id="PS01311">
    <property type="entry name" value="LGT"/>
    <property type="match status" value="1"/>
</dbReference>
<reference key="1">
    <citation type="journal article" date="2008" name="J. Bacteriol.">
        <title>The pangenome structure of Escherichia coli: comparative genomic analysis of E. coli commensal and pathogenic isolates.</title>
        <authorList>
            <person name="Rasko D.A."/>
            <person name="Rosovitz M.J."/>
            <person name="Myers G.S.A."/>
            <person name="Mongodin E.F."/>
            <person name="Fricke W.F."/>
            <person name="Gajer P."/>
            <person name="Crabtree J."/>
            <person name="Sebaihia M."/>
            <person name="Thomson N.R."/>
            <person name="Chaudhuri R."/>
            <person name="Henderson I.R."/>
            <person name="Sperandio V."/>
            <person name="Ravel J."/>
        </authorList>
    </citation>
    <scope>NUCLEOTIDE SEQUENCE [LARGE SCALE GENOMIC DNA]</scope>
    <source>
        <strain>E24377A / ETEC</strain>
    </source>
</reference>
<gene>
    <name evidence="1" type="primary">lgt</name>
    <name type="ordered locus">EcE24377A_3148</name>
</gene>
<comment type="function">
    <text evidence="1">Catalyzes the transfer of the diacylglyceryl group from phosphatidylglycerol to the sulfhydryl group of the N-terminal cysteine of a prolipoprotein, the first step in the formation of mature lipoproteins.</text>
</comment>
<comment type="catalytic activity">
    <reaction evidence="1">
        <text>L-cysteinyl-[prolipoprotein] + a 1,2-diacyl-sn-glycero-3-phospho-(1'-sn-glycerol) = an S-1,2-diacyl-sn-glyceryl-L-cysteinyl-[prolipoprotein] + sn-glycerol 1-phosphate + H(+)</text>
        <dbReference type="Rhea" id="RHEA:56712"/>
        <dbReference type="Rhea" id="RHEA-COMP:14679"/>
        <dbReference type="Rhea" id="RHEA-COMP:14680"/>
        <dbReference type="ChEBI" id="CHEBI:15378"/>
        <dbReference type="ChEBI" id="CHEBI:29950"/>
        <dbReference type="ChEBI" id="CHEBI:57685"/>
        <dbReference type="ChEBI" id="CHEBI:64716"/>
        <dbReference type="ChEBI" id="CHEBI:140658"/>
        <dbReference type="EC" id="2.5.1.145"/>
    </reaction>
</comment>
<comment type="pathway">
    <text evidence="1">Protein modification; lipoprotein biosynthesis (diacylglyceryl transfer).</text>
</comment>
<comment type="subcellular location">
    <subcellularLocation>
        <location evidence="1">Cell inner membrane</location>
        <topology evidence="1">Multi-pass membrane protein</topology>
    </subcellularLocation>
</comment>
<comment type="similarity">
    <text evidence="1">Belongs to the Lgt family.</text>
</comment>
<proteinExistence type="inferred from homology"/>
<sequence length="291" mass="33108">MTSSYLHFPEFDPVIFSIGPVALHWYGLMYLVGFIFAMWLATRRANRPGSGWTKNEVENLLYAGFLGVFLGGRIGYVLFYNFPQFMADPLYLFRVWDGGMSFHGGLIGVIVVMIIFARRTKRSFFQVSDFIAPLIPFGLGAGRLGNFINGELWGRVDPNFPFAMLFPGSRTEDILLLQTNPQWQSIFDTYGVLPRHPSQLYELLLEGVVLFIILNLYIRKPRPMGAVSGLFLIGYGAFRIIVEFFRQPDAQFTGAWVQYISMGQILSIPMIVAGVIMMVWAYRRSPQQHVS</sequence>